<name>RECO_METC4</name>
<protein>
    <recommendedName>
        <fullName evidence="1">DNA repair protein RecO</fullName>
    </recommendedName>
    <alternativeName>
        <fullName evidence="1">Recombination protein O</fullName>
    </alternativeName>
</protein>
<sequence>MQWIDDGLVIGLRKHGETGVVLELMTPEHGRHLGLVHGGRSRRMQPMLQPGNTLRATWRARLDGALGAYAVEPLTLNASRLMDSGLALYGVAHLSALLRLLPERDPHPALYEAAQILIAHLDDPEIAPALMVRFELALLAGLGFGLDLSHCAATGANDALVYVSPKSGRAVSASAGEPFRDRLLPLPPFLRDRDQPGSGWRTPDTQDVREGFTLTGYFLDQHVWRPRAQDTPEERARFVALGTGQS</sequence>
<dbReference type="EMBL" id="CP001298">
    <property type="protein sequence ID" value="ACK82069.1"/>
    <property type="molecule type" value="Genomic_DNA"/>
</dbReference>
<dbReference type="RefSeq" id="WP_015950003.1">
    <property type="nucleotide sequence ID" value="NC_011757.1"/>
</dbReference>
<dbReference type="SMR" id="B7KPI6"/>
<dbReference type="KEGG" id="mch:Mchl_1181"/>
<dbReference type="HOGENOM" id="CLU_086029_0_0_5"/>
<dbReference type="Proteomes" id="UP000002385">
    <property type="component" value="Chromosome"/>
</dbReference>
<dbReference type="GO" id="GO:0043590">
    <property type="term" value="C:bacterial nucleoid"/>
    <property type="evidence" value="ECO:0007669"/>
    <property type="project" value="TreeGrafter"/>
</dbReference>
<dbReference type="GO" id="GO:0006310">
    <property type="term" value="P:DNA recombination"/>
    <property type="evidence" value="ECO:0007669"/>
    <property type="project" value="UniProtKB-UniRule"/>
</dbReference>
<dbReference type="GO" id="GO:0006302">
    <property type="term" value="P:double-strand break repair"/>
    <property type="evidence" value="ECO:0007669"/>
    <property type="project" value="TreeGrafter"/>
</dbReference>
<dbReference type="Gene3D" id="2.40.50.140">
    <property type="entry name" value="Nucleic acid-binding proteins"/>
    <property type="match status" value="1"/>
</dbReference>
<dbReference type="Gene3D" id="1.20.1440.120">
    <property type="entry name" value="Recombination protein O, C-terminal domain"/>
    <property type="match status" value="1"/>
</dbReference>
<dbReference type="HAMAP" id="MF_00201">
    <property type="entry name" value="RecO"/>
    <property type="match status" value="1"/>
</dbReference>
<dbReference type="InterPro" id="IPR037278">
    <property type="entry name" value="ARFGAP/RecO"/>
</dbReference>
<dbReference type="InterPro" id="IPR022572">
    <property type="entry name" value="DNA_rep/recomb_RecO_N"/>
</dbReference>
<dbReference type="InterPro" id="IPR012340">
    <property type="entry name" value="NA-bd_OB-fold"/>
</dbReference>
<dbReference type="InterPro" id="IPR003717">
    <property type="entry name" value="RecO"/>
</dbReference>
<dbReference type="InterPro" id="IPR042242">
    <property type="entry name" value="RecO_C"/>
</dbReference>
<dbReference type="NCBIfam" id="TIGR00613">
    <property type="entry name" value="reco"/>
    <property type="match status" value="1"/>
</dbReference>
<dbReference type="PANTHER" id="PTHR33991">
    <property type="entry name" value="DNA REPAIR PROTEIN RECO"/>
    <property type="match status" value="1"/>
</dbReference>
<dbReference type="PANTHER" id="PTHR33991:SF1">
    <property type="entry name" value="DNA REPAIR PROTEIN RECO"/>
    <property type="match status" value="1"/>
</dbReference>
<dbReference type="Pfam" id="PF02565">
    <property type="entry name" value="RecO_C"/>
    <property type="match status" value="1"/>
</dbReference>
<dbReference type="Pfam" id="PF11967">
    <property type="entry name" value="RecO_N"/>
    <property type="match status" value="1"/>
</dbReference>
<dbReference type="SUPFAM" id="SSF57863">
    <property type="entry name" value="ArfGap/RecO-like zinc finger"/>
    <property type="match status" value="1"/>
</dbReference>
<dbReference type="SUPFAM" id="SSF50249">
    <property type="entry name" value="Nucleic acid-binding proteins"/>
    <property type="match status" value="1"/>
</dbReference>
<organism>
    <name type="scientific">Methylorubrum extorquens (strain CM4 / NCIMB 13688)</name>
    <name type="common">Methylobacterium extorquens</name>
    <dbReference type="NCBI Taxonomy" id="440085"/>
    <lineage>
        <taxon>Bacteria</taxon>
        <taxon>Pseudomonadati</taxon>
        <taxon>Pseudomonadota</taxon>
        <taxon>Alphaproteobacteria</taxon>
        <taxon>Hyphomicrobiales</taxon>
        <taxon>Methylobacteriaceae</taxon>
        <taxon>Methylorubrum</taxon>
    </lineage>
</organism>
<comment type="function">
    <text evidence="1">Involved in DNA repair and RecF pathway recombination.</text>
</comment>
<comment type="similarity">
    <text evidence="1">Belongs to the RecO family.</text>
</comment>
<gene>
    <name evidence="1" type="primary">recO</name>
    <name type="ordered locus">Mchl_1181</name>
</gene>
<keyword id="KW-0227">DNA damage</keyword>
<keyword id="KW-0233">DNA recombination</keyword>
<keyword id="KW-0234">DNA repair</keyword>
<proteinExistence type="inferred from homology"/>
<evidence type="ECO:0000255" key="1">
    <source>
        <dbReference type="HAMAP-Rule" id="MF_00201"/>
    </source>
</evidence>
<feature type="chain" id="PRO_1000193395" description="DNA repair protein RecO">
    <location>
        <begin position="1"/>
        <end position="246"/>
    </location>
</feature>
<accession>B7KPI6</accession>
<reference key="1">
    <citation type="submission" date="2008-12" db="EMBL/GenBank/DDBJ databases">
        <title>Complete sequence of chromosome of Methylobacterium chloromethanicum CM4.</title>
        <authorList>
            <consortium name="US DOE Joint Genome Institute"/>
            <person name="Lucas S."/>
            <person name="Copeland A."/>
            <person name="Lapidus A."/>
            <person name="Glavina del Rio T."/>
            <person name="Dalin E."/>
            <person name="Tice H."/>
            <person name="Bruce D."/>
            <person name="Goodwin L."/>
            <person name="Pitluck S."/>
            <person name="Chertkov O."/>
            <person name="Brettin T."/>
            <person name="Detter J.C."/>
            <person name="Han C."/>
            <person name="Larimer F."/>
            <person name="Land M."/>
            <person name="Hauser L."/>
            <person name="Kyrpides N."/>
            <person name="Mikhailova N."/>
            <person name="Marx C."/>
            <person name="Richardson P."/>
        </authorList>
    </citation>
    <scope>NUCLEOTIDE SEQUENCE [LARGE SCALE GENOMIC DNA]</scope>
    <source>
        <strain>CM4 / NCIMB 13688</strain>
    </source>
</reference>